<name>YAV4_XANCP</name>
<evidence type="ECO:0000250" key="1"/>
<evidence type="ECO:0000256" key="2">
    <source>
        <dbReference type="SAM" id="MobiDB-lite"/>
    </source>
</evidence>
<evidence type="ECO:0000305" key="3"/>
<dbReference type="EMBL" id="AE008922">
    <property type="protein sequence ID" value="AAM41387.1"/>
    <property type="molecule type" value="Genomic_DNA"/>
</dbReference>
<dbReference type="RefSeq" id="NP_637463.1">
    <property type="nucleotide sequence ID" value="NC_003902.1"/>
</dbReference>
<dbReference type="SMR" id="P0A0W0"/>
<dbReference type="STRING" id="190485.XCC2099"/>
<dbReference type="EnsemblBacteria" id="AAM41387">
    <property type="protein sequence ID" value="AAM41387"/>
    <property type="gene ID" value="XCC2099"/>
</dbReference>
<dbReference type="KEGG" id="xcc:XCC2099"/>
<dbReference type="eggNOG" id="COG5599">
    <property type="taxonomic scope" value="Bacteria"/>
</dbReference>
<dbReference type="HOGENOM" id="CLU_2249001_0_0_6"/>
<dbReference type="OrthoDB" id="21920at2"/>
<dbReference type="Proteomes" id="UP000001010">
    <property type="component" value="Chromosome"/>
</dbReference>
<dbReference type="GO" id="GO:0016787">
    <property type="term" value="F:hydrolase activity"/>
    <property type="evidence" value="ECO:0007669"/>
    <property type="project" value="UniProtKB-KW"/>
</dbReference>
<dbReference type="Gene3D" id="3.90.190.10">
    <property type="entry name" value="Protein tyrosine phosphatase superfamily"/>
    <property type="match status" value="1"/>
</dbReference>
<dbReference type="InterPro" id="IPR029021">
    <property type="entry name" value="Prot-tyrosine_phosphatase-like"/>
</dbReference>
<dbReference type="InterPro" id="IPR016130">
    <property type="entry name" value="Tyr_Pase_AS"/>
</dbReference>
<dbReference type="InterPro" id="IPR000387">
    <property type="entry name" value="Tyr_Pase_dom"/>
</dbReference>
<dbReference type="SUPFAM" id="SSF52799">
    <property type="entry name" value="(Phosphotyrosine protein) phosphatases II"/>
    <property type="match status" value="1"/>
</dbReference>
<dbReference type="PROSITE" id="PS00383">
    <property type="entry name" value="TYR_PHOSPHATASE_1"/>
    <property type="match status" value="1"/>
</dbReference>
<dbReference type="PROSITE" id="PS50056">
    <property type="entry name" value="TYR_PHOSPHATASE_2"/>
    <property type="match status" value="1"/>
</dbReference>
<proteinExistence type="inferred from homology"/>
<gene>
    <name type="primary">avrBs1.1</name>
    <name type="ordered locus">XCC2099</name>
</gene>
<accession>P0A0W0</accession>
<accession>P19519</accession>
<feature type="chain" id="PRO_0000094919" description="Uncharacterized protein AvrBs1.1">
    <location>
        <begin position="1"/>
        <end position="104"/>
    </location>
</feature>
<feature type="region of interest" description="Disordered" evidence="2">
    <location>
        <begin position="51"/>
        <end position="70"/>
    </location>
</feature>
<feature type="compositionally biased region" description="Basic and acidic residues" evidence="2">
    <location>
        <begin position="57"/>
        <end position="70"/>
    </location>
</feature>
<organism>
    <name type="scientific">Xanthomonas campestris pv. campestris (strain ATCC 33913 / DSM 3586 / NCPPB 528 / LMG 568 / P 25)</name>
    <dbReference type="NCBI Taxonomy" id="190485"/>
    <lineage>
        <taxon>Bacteria</taxon>
        <taxon>Pseudomonadati</taxon>
        <taxon>Pseudomonadota</taxon>
        <taxon>Gammaproteobacteria</taxon>
        <taxon>Lysobacterales</taxon>
        <taxon>Lysobacteraceae</taxon>
        <taxon>Xanthomonas</taxon>
    </lineage>
</organism>
<protein>
    <recommendedName>
        <fullName>Uncharacterized protein AvrBs1.1</fullName>
    </recommendedName>
</protein>
<keyword id="KW-0378">Hydrolase</keyword>
<keyword id="KW-1185">Reference proteome</keyword>
<keyword id="KW-0843">Virulence</keyword>
<reference key="1">
    <citation type="journal article" date="2002" name="Nature">
        <title>Comparison of the genomes of two Xanthomonas pathogens with differing host specificities.</title>
        <authorList>
            <person name="da Silva A.C.R."/>
            <person name="Ferro J.A."/>
            <person name="Reinach F.C."/>
            <person name="Farah C.S."/>
            <person name="Furlan L.R."/>
            <person name="Quaggio R.B."/>
            <person name="Monteiro-Vitorello C.B."/>
            <person name="Van Sluys M.A."/>
            <person name="Almeida N.F. Jr."/>
            <person name="Alves L.M.C."/>
            <person name="do Amaral A.M."/>
            <person name="Bertolini M.C."/>
            <person name="Camargo L.E.A."/>
            <person name="Camarotte G."/>
            <person name="Cannavan F."/>
            <person name="Cardozo J."/>
            <person name="Chambergo F."/>
            <person name="Ciapina L.P."/>
            <person name="Cicarelli R.M.B."/>
            <person name="Coutinho L.L."/>
            <person name="Cursino-Santos J.R."/>
            <person name="El-Dorry H."/>
            <person name="Faria J.B."/>
            <person name="Ferreira A.J.S."/>
            <person name="Ferreira R.C.C."/>
            <person name="Ferro M.I.T."/>
            <person name="Formighieri E.F."/>
            <person name="Franco M.C."/>
            <person name="Greggio C.C."/>
            <person name="Gruber A."/>
            <person name="Katsuyama A.M."/>
            <person name="Kishi L.T."/>
            <person name="Leite R.P."/>
            <person name="Lemos E.G.M."/>
            <person name="Lemos M.V.F."/>
            <person name="Locali E.C."/>
            <person name="Machado M.A."/>
            <person name="Madeira A.M.B.N."/>
            <person name="Martinez-Rossi N.M."/>
            <person name="Martins E.C."/>
            <person name="Meidanis J."/>
            <person name="Menck C.F.M."/>
            <person name="Miyaki C.Y."/>
            <person name="Moon D.H."/>
            <person name="Moreira L.M."/>
            <person name="Novo M.T.M."/>
            <person name="Okura V.K."/>
            <person name="Oliveira M.C."/>
            <person name="Oliveira V.R."/>
            <person name="Pereira H.A."/>
            <person name="Rossi A."/>
            <person name="Sena J.A.D."/>
            <person name="Silva C."/>
            <person name="de Souza R.F."/>
            <person name="Spinola L.A.F."/>
            <person name="Takita M.A."/>
            <person name="Tamura R.E."/>
            <person name="Teixeira E.C."/>
            <person name="Tezza R.I.D."/>
            <person name="Trindade dos Santos M."/>
            <person name="Truffi D."/>
            <person name="Tsai S.M."/>
            <person name="White F.F."/>
            <person name="Setubal J.C."/>
            <person name="Kitajima J.P."/>
        </authorList>
    </citation>
    <scope>NUCLEOTIDE SEQUENCE [LARGE SCALE GENOMIC DNA]</scope>
    <source>
        <strain>ATCC 33913 / DSM 3586 / NCPPB 528 / LMG 568 / P 25</strain>
    </source>
</reference>
<comment type="miscellaneous">
    <text evidence="1">This is one of the putative proteins coded by the open reading frames within the region required for AvrBs1 activity.</text>
</comment>
<comment type="similarity">
    <text evidence="3">Belongs to the protein-tyrosine phosphatase family.</text>
</comment>
<sequence>MEREMAHDERLHVHCGMGLGRTTIFIVMHDILRNAAMLSFDDIIERQRKFNPGRSLDNNKDVSDKGRSEFRNERSEFLPLFYEYAKQNPKGQPLLWSEWLDHNA</sequence>